<feature type="chain" id="PRO_0000337469" description="Elongation factor Tu 2">
    <location>
        <begin position="1"/>
        <end position="394"/>
    </location>
</feature>
<feature type="domain" description="tr-type G">
    <location>
        <begin position="10"/>
        <end position="204"/>
    </location>
</feature>
<feature type="region of interest" description="G1" evidence="1">
    <location>
        <begin position="19"/>
        <end position="26"/>
    </location>
</feature>
<feature type="region of interest" description="G2" evidence="1">
    <location>
        <begin position="60"/>
        <end position="64"/>
    </location>
</feature>
<feature type="region of interest" description="G3" evidence="1">
    <location>
        <begin position="81"/>
        <end position="84"/>
    </location>
</feature>
<feature type="region of interest" description="G4" evidence="1">
    <location>
        <begin position="136"/>
        <end position="139"/>
    </location>
</feature>
<feature type="region of interest" description="G5" evidence="1">
    <location>
        <begin position="174"/>
        <end position="176"/>
    </location>
</feature>
<feature type="binding site" evidence="2">
    <location>
        <begin position="19"/>
        <end position="26"/>
    </location>
    <ligand>
        <name>GTP</name>
        <dbReference type="ChEBI" id="CHEBI:37565"/>
    </ligand>
</feature>
<feature type="binding site" evidence="2">
    <location>
        <position position="26"/>
    </location>
    <ligand>
        <name>Mg(2+)</name>
        <dbReference type="ChEBI" id="CHEBI:18420"/>
    </ligand>
</feature>
<feature type="binding site" evidence="2">
    <location>
        <begin position="81"/>
        <end position="85"/>
    </location>
    <ligand>
        <name>GTP</name>
        <dbReference type="ChEBI" id="CHEBI:37565"/>
    </ligand>
</feature>
<feature type="binding site" evidence="2">
    <location>
        <begin position="136"/>
        <end position="139"/>
    </location>
    <ligand>
        <name>GTP</name>
        <dbReference type="ChEBI" id="CHEBI:37565"/>
    </ligand>
</feature>
<accession>Q3IJV1</accession>
<protein>
    <recommendedName>
        <fullName evidence="2">Elongation factor Tu 2</fullName>
        <shortName evidence="2">EF-Tu 2</shortName>
        <ecNumber evidence="2">3.6.5.3</ecNumber>
    </recommendedName>
</protein>
<reference key="1">
    <citation type="journal article" date="2005" name="Genome Res.">
        <title>Coping with cold: the genome of the versatile marine Antarctica bacterium Pseudoalteromonas haloplanktis TAC125.</title>
        <authorList>
            <person name="Medigue C."/>
            <person name="Krin E."/>
            <person name="Pascal G."/>
            <person name="Barbe V."/>
            <person name="Bernsel A."/>
            <person name="Bertin P.N."/>
            <person name="Cheung F."/>
            <person name="Cruveiller S."/>
            <person name="D'Amico S."/>
            <person name="Duilio A."/>
            <person name="Fang G."/>
            <person name="Feller G."/>
            <person name="Ho C."/>
            <person name="Mangenot S."/>
            <person name="Marino G."/>
            <person name="Nilsson J."/>
            <person name="Parrilli E."/>
            <person name="Rocha E.P.C."/>
            <person name="Rouy Z."/>
            <person name="Sekowska A."/>
            <person name="Tutino M.L."/>
            <person name="Vallenet D."/>
            <person name="von Heijne G."/>
            <person name="Danchin A."/>
        </authorList>
    </citation>
    <scope>NUCLEOTIDE SEQUENCE [LARGE SCALE GENOMIC DNA]</scope>
    <source>
        <strain>TAC 125</strain>
    </source>
</reference>
<keyword id="KW-0963">Cytoplasm</keyword>
<keyword id="KW-0251">Elongation factor</keyword>
<keyword id="KW-0342">GTP-binding</keyword>
<keyword id="KW-0378">Hydrolase</keyword>
<keyword id="KW-0460">Magnesium</keyword>
<keyword id="KW-0479">Metal-binding</keyword>
<keyword id="KW-0547">Nucleotide-binding</keyword>
<keyword id="KW-0648">Protein biosynthesis</keyword>
<keyword id="KW-1185">Reference proteome</keyword>
<proteinExistence type="inferred from homology"/>
<sequence length="394" mass="43281">MAKAKFERVKPHVNVGTIGHVDHGKTTLTAAITNVLAKVYGGVAKDFASIDNAPEERERGITISTSHVEYDTPTRHYAHVDCPGHADYVKNMITGAAQMDGAILVVAATDGPMPQTREHILLSRQVGVPYIIVFMNKCDMVDDEELLELVEMEVRELLSEYDFPGDDLPLIQGSALKALEGEKEWEDKIVELANALDSYIPEPERDIDKAFIMPIEDVFSIQGRGTVVTGRVEAGIIRINDEIEIVGIRDTTKSICTGVEMFRKLLDEGRAGENIGALLRGTKREDVERGQVLAKPGSIKPHTTFESEVYVLSKDEGGRHTPFFKGYRPQFYFRTTDVTGDVQLPEGVEMVMPGDNVKMTVTLIAPIAMDEGLRFAIREGGRTVGAGVVANIVA</sequence>
<dbReference type="EC" id="3.6.5.3" evidence="2"/>
<dbReference type="EMBL" id="CR954246">
    <property type="protein sequence ID" value="CAI87946.1"/>
    <property type="molecule type" value="Genomic_DNA"/>
</dbReference>
<dbReference type="SMR" id="Q3IJV1"/>
<dbReference type="STRING" id="326442.PSHAa2911"/>
<dbReference type="KEGG" id="pha:PSHAa2911"/>
<dbReference type="PATRIC" id="fig|326442.8.peg.2809"/>
<dbReference type="eggNOG" id="COG0050">
    <property type="taxonomic scope" value="Bacteria"/>
</dbReference>
<dbReference type="HOGENOM" id="CLU_007265_0_0_6"/>
<dbReference type="BioCyc" id="PHAL326442:PSHA_RS14280-MONOMER"/>
<dbReference type="Proteomes" id="UP000006843">
    <property type="component" value="Chromosome I"/>
</dbReference>
<dbReference type="GO" id="GO:0005829">
    <property type="term" value="C:cytosol"/>
    <property type="evidence" value="ECO:0007669"/>
    <property type="project" value="TreeGrafter"/>
</dbReference>
<dbReference type="GO" id="GO:0005525">
    <property type="term" value="F:GTP binding"/>
    <property type="evidence" value="ECO:0007669"/>
    <property type="project" value="UniProtKB-UniRule"/>
</dbReference>
<dbReference type="GO" id="GO:0003924">
    <property type="term" value="F:GTPase activity"/>
    <property type="evidence" value="ECO:0007669"/>
    <property type="project" value="InterPro"/>
</dbReference>
<dbReference type="GO" id="GO:0097216">
    <property type="term" value="F:guanosine tetraphosphate binding"/>
    <property type="evidence" value="ECO:0007669"/>
    <property type="project" value="UniProtKB-ARBA"/>
</dbReference>
<dbReference type="GO" id="GO:0003746">
    <property type="term" value="F:translation elongation factor activity"/>
    <property type="evidence" value="ECO:0007669"/>
    <property type="project" value="UniProtKB-UniRule"/>
</dbReference>
<dbReference type="CDD" id="cd01884">
    <property type="entry name" value="EF_Tu"/>
    <property type="match status" value="1"/>
</dbReference>
<dbReference type="CDD" id="cd03697">
    <property type="entry name" value="EFTU_II"/>
    <property type="match status" value="1"/>
</dbReference>
<dbReference type="CDD" id="cd03707">
    <property type="entry name" value="EFTU_III"/>
    <property type="match status" value="1"/>
</dbReference>
<dbReference type="FunFam" id="2.40.30.10:FF:000001">
    <property type="entry name" value="Elongation factor Tu"/>
    <property type="match status" value="1"/>
</dbReference>
<dbReference type="FunFam" id="3.40.50.300:FF:000003">
    <property type="entry name" value="Elongation factor Tu"/>
    <property type="match status" value="1"/>
</dbReference>
<dbReference type="Gene3D" id="3.40.50.300">
    <property type="entry name" value="P-loop containing nucleotide triphosphate hydrolases"/>
    <property type="match status" value="1"/>
</dbReference>
<dbReference type="Gene3D" id="2.40.30.10">
    <property type="entry name" value="Translation factors"/>
    <property type="match status" value="2"/>
</dbReference>
<dbReference type="HAMAP" id="MF_00118_B">
    <property type="entry name" value="EF_Tu_B"/>
    <property type="match status" value="1"/>
</dbReference>
<dbReference type="InterPro" id="IPR041709">
    <property type="entry name" value="EF-Tu_GTP-bd"/>
</dbReference>
<dbReference type="InterPro" id="IPR050055">
    <property type="entry name" value="EF-Tu_GTPase"/>
</dbReference>
<dbReference type="InterPro" id="IPR004161">
    <property type="entry name" value="EFTu-like_2"/>
</dbReference>
<dbReference type="InterPro" id="IPR033720">
    <property type="entry name" value="EFTU_2"/>
</dbReference>
<dbReference type="InterPro" id="IPR031157">
    <property type="entry name" value="G_TR_CS"/>
</dbReference>
<dbReference type="InterPro" id="IPR027417">
    <property type="entry name" value="P-loop_NTPase"/>
</dbReference>
<dbReference type="InterPro" id="IPR005225">
    <property type="entry name" value="Small_GTP-bd"/>
</dbReference>
<dbReference type="InterPro" id="IPR000795">
    <property type="entry name" value="T_Tr_GTP-bd_dom"/>
</dbReference>
<dbReference type="InterPro" id="IPR009000">
    <property type="entry name" value="Transl_B-barrel_sf"/>
</dbReference>
<dbReference type="InterPro" id="IPR009001">
    <property type="entry name" value="Transl_elong_EF1A/Init_IF2_C"/>
</dbReference>
<dbReference type="InterPro" id="IPR004541">
    <property type="entry name" value="Transl_elong_EFTu/EF1A_bac/org"/>
</dbReference>
<dbReference type="InterPro" id="IPR004160">
    <property type="entry name" value="Transl_elong_EFTu/EF1A_C"/>
</dbReference>
<dbReference type="NCBIfam" id="TIGR00485">
    <property type="entry name" value="EF-Tu"/>
    <property type="match status" value="1"/>
</dbReference>
<dbReference type="NCBIfam" id="NF000766">
    <property type="entry name" value="PRK00049.1"/>
    <property type="match status" value="1"/>
</dbReference>
<dbReference type="NCBIfam" id="NF009372">
    <property type="entry name" value="PRK12735.1"/>
    <property type="match status" value="1"/>
</dbReference>
<dbReference type="NCBIfam" id="NF009373">
    <property type="entry name" value="PRK12736.1"/>
    <property type="match status" value="1"/>
</dbReference>
<dbReference type="NCBIfam" id="TIGR00231">
    <property type="entry name" value="small_GTP"/>
    <property type="match status" value="1"/>
</dbReference>
<dbReference type="PANTHER" id="PTHR43721:SF22">
    <property type="entry name" value="ELONGATION FACTOR TU, MITOCHONDRIAL"/>
    <property type="match status" value="1"/>
</dbReference>
<dbReference type="PANTHER" id="PTHR43721">
    <property type="entry name" value="ELONGATION FACTOR TU-RELATED"/>
    <property type="match status" value="1"/>
</dbReference>
<dbReference type="Pfam" id="PF00009">
    <property type="entry name" value="GTP_EFTU"/>
    <property type="match status" value="1"/>
</dbReference>
<dbReference type="Pfam" id="PF03144">
    <property type="entry name" value="GTP_EFTU_D2"/>
    <property type="match status" value="1"/>
</dbReference>
<dbReference type="Pfam" id="PF03143">
    <property type="entry name" value="GTP_EFTU_D3"/>
    <property type="match status" value="1"/>
</dbReference>
<dbReference type="PRINTS" id="PR00315">
    <property type="entry name" value="ELONGATNFCT"/>
</dbReference>
<dbReference type="SUPFAM" id="SSF50465">
    <property type="entry name" value="EF-Tu/eEF-1alpha/eIF2-gamma C-terminal domain"/>
    <property type="match status" value="1"/>
</dbReference>
<dbReference type="SUPFAM" id="SSF52540">
    <property type="entry name" value="P-loop containing nucleoside triphosphate hydrolases"/>
    <property type="match status" value="1"/>
</dbReference>
<dbReference type="SUPFAM" id="SSF50447">
    <property type="entry name" value="Translation proteins"/>
    <property type="match status" value="1"/>
</dbReference>
<dbReference type="PROSITE" id="PS00301">
    <property type="entry name" value="G_TR_1"/>
    <property type="match status" value="1"/>
</dbReference>
<dbReference type="PROSITE" id="PS51722">
    <property type="entry name" value="G_TR_2"/>
    <property type="match status" value="1"/>
</dbReference>
<evidence type="ECO:0000250" key="1"/>
<evidence type="ECO:0000255" key="2">
    <source>
        <dbReference type="HAMAP-Rule" id="MF_00118"/>
    </source>
</evidence>
<gene>
    <name evidence="2" type="primary">tuf2</name>
    <name type="synonym">tufB</name>
    <name type="ordered locus">PSHAa2911</name>
</gene>
<organism>
    <name type="scientific">Pseudoalteromonas translucida (strain TAC 125)</name>
    <dbReference type="NCBI Taxonomy" id="326442"/>
    <lineage>
        <taxon>Bacteria</taxon>
        <taxon>Pseudomonadati</taxon>
        <taxon>Pseudomonadota</taxon>
        <taxon>Gammaproteobacteria</taxon>
        <taxon>Alteromonadales</taxon>
        <taxon>Pseudoalteromonadaceae</taxon>
        <taxon>Pseudoalteromonas</taxon>
    </lineage>
</organism>
<comment type="function">
    <text evidence="2">GTP hydrolase that promotes the GTP-dependent binding of aminoacyl-tRNA to the A-site of ribosomes during protein biosynthesis.</text>
</comment>
<comment type="catalytic activity">
    <reaction evidence="2">
        <text>GTP + H2O = GDP + phosphate + H(+)</text>
        <dbReference type="Rhea" id="RHEA:19669"/>
        <dbReference type="ChEBI" id="CHEBI:15377"/>
        <dbReference type="ChEBI" id="CHEBI:15378"/>
        <dbReference type="ChEBI" id="CHEBI:37565"/>
        <dbReference type="ChEBI" id="CHEBI:43474"/>
        <dbReference type="ChEBI" id="CHEBI:58189"/>
        <dbReference type="EC" id="3.6.5.3"/>
    </reaction>
    <physiologicalReaction direction="left-to-right" evidence="2">
        <dbReference type="Rhea" id="RHEA:19670"/>
    </physiologicalReaction>
</comment>
<comment type="subunit">
    <text evidence="2">Monomer.</text>
</comment>
<comment type="subcellular location">
    <subcellularLocation>
        <location evidence="2">Cytoplasm</location>
    </subcellularLocation>
</comment>
<comment type="similarity">
    <text evidence="2">Belongs to the TRAFAC class translation factor GTPase superfamily. Classic translation factor GTPase family. EF-Tu/EF-1A subfamily.</text>
</comment>
<name>EFTU2_PSET1</name>